<dbReference type="EMBL" id="AY462109">
    <property type="protein sequence ID" value="AAR31111.1"/>
    <property type="molecule type" value="mRNA"/>
</dbReference>
<dbReference type="RefSeq" id="NP_001009765.1">
    <property type="nucleotide sequence ID" value="NM_001009765.1"/>
</dbReference>
<dbReference type="SMR" id="Q6S9E0"/>
<dbReference type="STRING" id="9940.ENSOARP00000006501"/>
<dbReference type="PaxDb" id="9940-ENSOARP00000006501"/>
<dbReference type="GeneID" id="443283"/>
<dbReference type="KEGG" id="oas:443283"/>
<dbReference type="CTD" id="7538"/>
<dbReference type="eggNOG" id="KOG1677">
    <property type="taxonomic scope" value="Eukaryota"/>
</dbReference>
<dbReference type="OrthoDB" id="410307at2759"/>
<dbReference type="Proteomes" id="UP000002356">
    <property type="component" value="Unplaced"/>
</dbReference>
<dbReference type="GO" id="GO:0005737">
    <property type="term" value="C:cytoplasm"/>
    <property type="evidence" value="ECO:0000250"/>
    <property type="project" value="UniProtKB"/>
</dbReference>
<dbReference type="GO" id="GO:0010494">
    <property type="term" value="C:cytoplasmic stress granule"/>
    <property type="evidence" value="ECO:0000250"/>
    <property type="project" value="UniProtKB"/>
</dbReference>
<dbReference type="GO" id="GO:0005634">
    <property type="term" value="C:nucleus"/>
    <property type="evidence" value="ECO:0000250"/>
    <property type="project" value="UniProtKB"/>
</dbReference>
<dbReference type="GO" id="GO:0000932">
    <property type="term" value="C:P-body"/>
    <property type="evidence" value="ECO:0000250"/>
    <property type="project" value="UniProtKB"/>
</dbReference>
<dbReference type="GO" id="GO:1990904">
    <property type="term" value="C:ribonucleoprotein complex"/>
    <property type="evidence" value="ECO:0000250"/>
    <property type="project" value="UniProtKB"/>
</dbReference>
<dbReference type="GO" id="GO:0071889">
    <property type="term" value="F:14-3-3 protein binding"/>
    <property type="evidence" value="ECO:0000250"/>
    <property type="project" value="UniProtKB"/>
</dbReference>
<dbReference type="GO" id="GO:0003677">
    <property type="term" value="F:DNA binding"/>
    <property type="evidence" value="ECO:0007669"/>
    <property type="project" value="UniProtKB-KW"/>
</dbReference>
<dbReference type="GO" id="GO:0031072">
    <property type="term" value="F:heat shock protein binding"/>
    <property type="evidence" value="ECO:0000250"/>
    <property type="project" value="UniProtKB"/>
</dbReference>
<dbReference type="GO" id="GO:0035925">
    <property type="term" value="F:mRNA 3'-UTR AU-rich region binding"/>
    <property type="evidence" value="ECO:0000250"/>
    <property type="project" value="UniProtKB"/>
</dbReference>
<dbReference type="GO" id="GO:0003730">
    <property type="term" value="F:mRNA 3'-UTR binding"/>
    <property type="evidence" value="ECO:0000250"/>
    <property type="project" value="UniProtKB"/>
</dbReference>
<dbReference type="GO" id="GO:0003729">
    <property type="term" value="F:mRNA binding"/>
    <property type="evidence" value="ECO:0000250"/>
    <property type="project" value="UniProtKB"/>
</dbReference>
<dbReference type="GO" id="GO:0070063">
    <property type="term" value="F:RNA polymerase binding"/>
    <property type="evidence" value="ECO:0000250"/>
    <property type="project" value="UniProtKB"/>
</dbReference>
<dbReference type="GO" id="GO:0008270">
    <property type="term" value="F:zinc ion binding"/>
    <property type="evidence" value="ECO:0007669"/>
    <property type="project" value="UniProtKB-KW"/>
</dbReference>
<dbReference type="GO" id="GO:0061158">
    <property type="term" value="P:3'-UTR-mediated mRNA destabilization"/>
    <property type="evidence" value="ECO:0000250"/>
    <property type="project" value="UniProtKB"/>
</dbReference>
<dbReference type="GO" id="GO:0070935">
    <property type="term" value="P:3'-UTR-mediated mRNA stabilization"/>
    <property type="evidence" value="ECO:0000250"/>
    <property type="project" value="UniProtKB"/>
</dbReference>
<dbReference type="GO" id="GO:0071364">
    <property type="term" value="P:cellular response to epidermal growth factor stimulus"/>
    <property type="evidence" value="ECO:0000250"/>
    <property type="project" value="UniProtKB"/>
</dbReference>
<dbReference type="GO" id="GO:0044344">
    <property type="term" value="P:cellular response to fibroblast growth factor stimulus"/>
    <property type="evidence" value="ECO:0000250"/>
    <property type="project" value="UniProtKB"/>
</dbReference>
<dbReference type="GO" id="GO:0071385">
    <property type="term" value="P:cellular response to glucocorticoid stimulus"/>
    <property type="evidence" value="ECO:0000250"/>
    <property type="project" value="UniProtKB"/>
</dbReference>
<dbReference type="GO" id="GO:0097011">
    <property type="term" value="P:cellular response to granulocyte macrophage colony-stimulating factor stimulus"/>
    <property type="evidence" value="ECO:0000250"/>
    <property type="project" value="UniProtKB"/>
</dbReference>
<dbReference type="GO" id="GO:0071222">
    <property type="term" value="P:cellular response to lipopolysaccharide"/>
    <property type="evidence" value="ECO:0000250"/>
    <property type="project" value="UniProtKB"/>
</dbReference>
<dbReference type="GO" id="GO:0071356">
    <property type="term" value="P:cellular response to tumor necrosis factor"/>
    <property type="evidence" value="ECO:0000250"/>
    <property type="project" value="UniProtKB"/>
</dbReference>
<dbReference type="GO" id="GO:0000165">
    <property type="term" value="P:MAPK cascade"/>
    <property type="evidence" value="ECO:0000250"/>
    <property type="project" value="UniProtKB"/>
</dbReference>
<dbReference type="GO" id="GO:0035278">
    <property type="term" value="P:miRNA-mediated gene silencing by inhibition of translation"/>
    <property type="evidence" value="ECO:0000250"/>
    <property type="project" value="UniProtKB"/>
</dbReference>
<dbReference type="GO" id="GO:0006402">
    <property type="term" value="P:mRNA catabolic process"/>
    <property type="evidence" value="ECO:0000250"/>
    <property type="project" value="UniProtKB"/>
</dbReference>
<dbReference type="GO" id="GO:0051028">
    <property type="term" value="P:mRNA transport"/>
    <property type="evidence" value="ECO:0000250"/>
    <property type="project" value="UniProtKB"/>
</dbReference>
<dbReference type="GO" id="GO:0045647">
    <property type="term" value="P:negative regulation of erythrocyte differentiation"/>
    <property type="evidence" value="ECO:0000250"/>
    <property type="project" value="UniProtKB"/>
</dbReference>
<dbReference type="GO" id="GO:0032703">
    <property type="term" value="P:negative regulation of interleukin-2 production"/>
    <property type="evidence" value="ECO:0000250"/>
    <property type="project" value="UniProtKB"/>
</dbReference>
<dbReference type="GO" id="GO:1904246">
    <property type="term" value="P:negative regulation of polynucleotide adenylyltransferase activity"/>
    <property type="evidence" value="ECO:0000250"/>
    <property type="project" value="UniProtKB"/>
</dbReference>
<dbReference type="GO" id="GO:0032897">
    <property type="term" value="P:negative regulation of viral transcription"/>
    <property type="evidence" value="ECO:0000250"/>
    <property type="project" value="UniProtKB"/>
</dbReference>
<dbReference type="GO" id="GO:0031086">
    <property type="term" value="P:nuclear-transcribed mRNA catabolic process, deadenylation-independent decay"/>
    <property type="evidence" value="ECO:0000250"/>
    <property type="project" value="UniProtKB"/>
</dbReference>
<dbReference type="GO" id="GO:0038066">
    <property type="term" value="P:p38MAPK cascade"/>
    <property type="evidence" value="ECO:0000250"/>
    <property type="project" value="UniProtKB"/>
</dbReference>
<dbReference type="GO" id="GO:1901835">
    <property type="term" value="P:positive regulation of deadenylation-independent decapping of nuclear-transcribed mRNA"/>
    <property type="evidence" value="ECO:0000250"/>
    <property type="project" value="UniProtKB"/>
</dbReference>
<dbReference type="GO" id="GO:0045600">
    <property type="term" value="P:positive regulation of fat cell differentiation"/>
    <property type="evidence" value="ECO:0000250"/>
    <property type="project" value="UniProtKB"/>
</dbReference>
<dbReference type="GO" id="GO:1904582">
    <property type="term" value="P:positive regulation of intracellular mRNA localization"/>
    <property type="evidence" value="ECO:0000250"/>
    <property type="project" value="UniProtKB"/>
</dbReference>
<dbReference type="GO" id="GO:2000637">
    <property type="term" value="P:positive regulation of miRNA-mediated gene silencing"/>
    <property type="evidence" value="ECO:0000250"/>
    <property type="project" value="UniProtKB"/>
</dbReference>
<dbReference type="GO" id="GO:0061014">
    <property type="term" value="P:positive regulation of mRNA catabolic process"/>
    <property type="evidence" value="ECO:0000250"/>
    <property type="project" value="UniProtKB"/>
</dbReference>
<dbReference type="GO" id="GO:1900153">
    <property type="term" value="P:positive regulation of nuclear-transcribed mRNA catabolic process, deadenylation-dependent decay"/>
    <property type="evidence" value="ECO:0000250"/>
    <property type="project" value="UniProtKB"/>
</dbReference>
<dbReference type="GO" id="GO:0060213">
    <property type="term" value="P:positive regulation of nuclear-transcribed mRNA poly(A) tail shortening"/>
    <property type="evidence" value="ECO:0000250"/>
    <property type="project" value="UniProtKB"/>
</dbReference>
<dbReference type="GO" id="GO:1902172">
    <property type="term" value="P:regulation of keratinocyte apoptotic process"/>
    <property type="evidence" value="ECO:0000250"/>
    <property type="project" value="UniProtKB"/>
</dbReference>
<dbReference type="GO" id="GO:0045616">
    <property type="term" value="P:regulation of keratinocyte differentiation"/>
    <property type="evidence" value="ECO:0000250"/>
    <property type="project" value="UniProtKB"/>
</dbReference>
<dbReference type="GO" id="GO:0010837">
    <property type="term" value="P:regulation of keratinocyte proliferation"/>
    <property type="evidence" value="ECO:0000250"/>
    <property type="project" value="UniProtKB"/>
</dbReference>
<dbReference type="GO" id="GO:0043488">
    <property type="term" value="P:regulation of mRNA stability"/>
    <property type="evidence" value="ECO:0000250"/>
    <property type="project" value="UniProtKB"/>
</dbReference>
<dbReference type="GO" id="GO:0032680">
    <property type="term" value="P:regulation of tumor necrosis factor production"/>
    <property type="evidence" value="ECO:0000250"/>
    <property type="project" value="UniProtKB"/>
</dbReference>
<dbReference type="GO" id="GO:0042594">
    <property type="term" value="P:response to starvation"/>
    <property type="evidence" value="ECO:0000250"/>
    <property type="project" value="UniProtKB"/>
</dbReference>
<dbReference type="GO" id="GO:0009611">
    <property type="term" value="P:response to wounding"/>
    <property type="evidence" value="ECO:0000250"/>
    <property type="project" value="UniProtKB"/>
</dbReference>
<dbReference type="FunFam" id="4.10.1000.10:FF:000001">
    <property type="entry name" value="zinc finger CCCH domain-containing protein 15-like"/>
    <property type="match status" value="1"/>
</dbReference>
<dbReference type="FunFam" id="4.10.1000.10:FF:000002">
    <property type="entry name" value="Zinc finger protein 36, C3H1 type-like 1"/>
    <property type="match status" value="1"/>
</dbReference>
<dbReference type="Gene3D" id="4.10.1000.10">
    <property type="entry name" value="Zinc finger, CCCH-type"/>
    <property type="match status" value="2"/>
</dbReference>
<dbReference type="InterPro" id="IPR045877">
    <property type="entry name" value="ZFP36-like"/>
</dbReference>
<dbReference type="InterPro" id="IPR000571">
    <property type="entry name" value="Znf_CCCH"/>
</dbReference>
<dbReference type="InterPro" id="IPR036855">
    <property type="entry name" value="Znf_CCCH_sf"/>
</dbReference>
<dbReference type="PANTHER" id="PTHR12547">
    <property type="entry name" value="CCCH ZINC FINGER/TIS11-RELATED"/>
    <property type="match status" value="1"/>
</dbReference>
<dbReference type="PANTHER" id="PTHR12547:SF58">
    <property type="entry name" value="MRNA DECAY ACTIVATOR PROTEIN ZFP36"/>
    <property type="match status" value="1"/>
</dbReference>
<dbReference type="Pfam" id="PF00642">
    <property type="entry name" value="zf-CCCH"/>
    <property type="match status" value="2"/>
</dbReference>
<dbReference type="SMART" id="SM00356">
    <property type="entry name" value="ZnF_C3H1"/>
    <property type="match status" value="2"/>
</dbReference>
<dbReference type="SUPFAM" id="SSF90229">
    <property type="entry name" value="CCCH zinc finger"/>
    <property type="match status" value="2"/>
</dbReference>
<dbReference type="PROSITE" id="PS50103">
    <property type="entry name" value="ZF_C3H1"/>
    <property type="match status" value="2"/>
</dbReference>
<protein>
    <recommendedName>
        <fullName evidence="6">mRNA decay activator protein ZFP36</fullName>
    </recommendedName>
    <alternativeName>
        <fullName evidence="2">Tristetraprolin</fullName>
        <shortName evidence="2">TTP</shortName>
    </alternativeName>
    <alternativeName>
        <fullName evidence="2">Zinc finger protein 36</fullName>
        <shortName evidence="1">Zfp-36</shortName>
    </alternativeName>
</protein>
<sequence length="325" mass="34037">MDLAAIYKSLLSLSPELPSDLGETESSTSWASSGPWSLSSSDSSLPEAAARLPGRSTSLVEGRSCGWVPPPPGFAPLAPRPSSELSPSPTSPTATPTTSSRYKTELCRTFSESGRCRYGAKCQFAHGLGELRQPSRHPKYKTELCHKFYLQGRCPYGSRCHFIHNPSEDLAAPGHPHVLRQSISFSGLPSGRRTSPPPASLAGPSVPSWSFSPSSSPPPPPGDLPLSPSAFSAAPGTPVSRRDPTPACCPSCRRATPNSVWGPVGGLARSPSAHSLGSDPDEYASSGSSLGGSDSPVFEAGVFGPPQPPAAPRRLPIFNRISVSE</sequence>
<name>TTP_SHEEP</name>
<gene>
    <name evidence="2" type="primary">ZFP36</name>
</gene>
<keyword id="KW-0963">Cytoplasm</keyword>
<keyword id="KW-0217">Developmental protein</keyword>
<keyword id="KW-0238">DNA-binding</keyword>
<keyword id="KW-0271">Exosome</keyword>
<keyword id="KW-0479">Metal-binding</keyword>
<keyword id="KW-0509">mRNA transport</keyword>
<keyword id="KW-0539">Nucleus</keyword>
<keyword id="KW-0597">Phosphoprotein</keyword>
<keyword id="KW-1185">Reference proteome</keyword>
<keyword id="KW-0677">Repeat</keyword>
<keyword id="KW-0687">Ribonucleoprotein</keyword>
<keyword id="KW-0813">Transport</keyword>
<keyword id="KW-0832">Ubl conjugation</keyword>
<keyword id="KW-0862">Zinc</keyword>
<keyword id="KW-0863">Zinc-finger</keyword>
<feature type="chain" id="PRO_0000089166" description="mRNA decay activator protein ZFP36">
    <location>
        <begin position="1"/>
        <end position="325"/>
    </location>
</feature>
<feature type="repeat" description="P-P-P-P-G">
    <location>
        <begin position="69"/>
        <end position="73"/>
    </location>
</feature>
<feature type="repeat" description="P-P-P-P-G">
    <location>
        <begin position="196"/>
        <end position="200"/>
    </location>
</feature>
<feature type="repeat" description="P-P-P-P-G">
    <location>
        <begin position="217"/>
        <end position="222"/>
    </location>
</feature>
<feature type="zinc finger region" description="C3H1-type 1" evidence="4">
    <location>
        <begin position="101"/>
        <end position="129"/>
    </location>
</feature>
<feature type="zinc finger region" description="C3H1-type 2" evidence="4">
    <location>
        <begin position="139"/>
        <end position="167"/>
    </location>
</feature>
<feature type="region of interest" description="Necessary for localization of ARE-containing mRNAs to processing bodies (PBs)" evidence="2">
    <location>
        <begin position="1"/>
        <end position="172"/>
    </location>
</feature>
<feature type="region of interest" description="Necessary and sufficient for the association with mRNA decay enzymes and mRNA decay activation" evidence="2">
    <location>
        <begin position="1"/>
        <end position="98"/>
    </location>
</feature>
<feature type="region of interest" description="Necessary for nuclear export" evidence="3">
    <location>
        <begin position="1"/>
        <end position="15"/>
    </location>
</feature>
<feature type="region of interest" description="Disordered" evidence="5">
    <location>
        <begin position="15"/>
        <end position="101"/>
    </location>
</feature>
<feature type="region of interest" description="Necessary for nuclear localization" evidence="3">
    <location>
        <begin position="93"/>
        <end position="166"/>
    </location>
</feature>
<feature type="region of interest" description="Necessary for RNA-binding" evidence="2">
    <location>
        <begin position="95"/>
        <end position="171"/>
    </location>
</feature>
<feature type="region of interest" description="Necessary for localization of ARE-containing mRNAs to processing bodies (PBs)" evidence="2">
    <location>
        <begin position="98"/>
        <end position="325"/>
    </location>
</feature>
<feature type="region of interest" description="Necessary for interaction with PABPN1" evidence="1">
    <location>
        <begin position="101"/>
        <end position="192"/>
    </location>
</feature>
<feature type="region of interest" description="Necessary for mRNA decay activation" evidence="2">
    <location>
        <begin position="172"/>
        <end position="325"/>
    </location>
</feature>
<feature type="region of interest" description="Disordered" evidence="5">
    <location>
        <begin position="185"/>
        <end position="248"/>
    </location>
</feature>
<feature type="region of interest" description="Disordered" evidence="5">
    <location>
        <begin position="260"/>
        <end position="325"/>
    </location>
</feature>
<feature type="region of interest" description="Interaction with CNOT1" evidence="2">
    <location>
        <begin position="311"/>
        <end position="325"/>
    </location>
</feature>
<feature type="compositionally biased region" description="Low complexity" evidence="5">
    <location>
        <begin position="15"/>
        <end position="48"/>
    </location>
</feature>
<feature type="compositionally biased region" description="Low complexity" evidence="5">
    <location>
        <begin position="75"/>
        <end position="101"/>
    </location>
</feature>
<feature type="compositionally biased region" description="Low complexity" evidence="5">
    <location>
        <begin position="204"/>
        <end position="214"/>
    </location>
</feature>
<feature type="compositionally biased region" description="Low complexity" evidence="5">
    <location>
        <begin position="285"/>
        <end position="295"/>
    </location>
</feature>
<feature type="modified residue" description="Phosphoserine; by MAPKAPK2" evidence="1">
    <location>
        <position position="58"/>
    </location>
</feature>
<feature type="modified residue" description="Phosphoserine" evidence="2">
    <location>
        <position position="64"/>
    </location>
</feature>
<feature type="modified residue" description="Phosphoserine" evidence="2">
    <location>
        <position position="86"/>
    </location>
</feature>
<feature type="modified residue" description="Phosphoserine" evidence="1">
    <location>
        <position position="88"/>
    </location>
</feature>
<feature type="modified residue" description="Phosphothreonine" evidence="2">
    <location>
        <position position="90"/>
    </location>
</feature>
<feature type="modified residue" description="Phosphoserine" evidence="2">
    <location>
        <position position="91"/>
    </location>
</feature>
<feature type="modified residue" description="Phosphoserine" evidence="2">
    <location>
        <position position="167"/>
    </location>
</feature>
<feature type="modified residue" description="Phosphoserine; by MAPKAPK2" evidence="2">
    <location>
        <position position="184"/>
    </location>
</feature>
<feature type="modified residue" description="Phosphoserine" evidence="2">
    <location>
        <position position="195"/>
    </location>
</feature>
<feature type="modified residue" description="Phosphoserine" evidence="2">
    <location>
        <position position="216"/>
    </location>
</feature>
<feature type="modified residue" description="Phosphoserine; by MAPK1; in vitro" evidence="2">
    <location>
        <position position="227"/>
    </location>
</feature>
<feature type="modified residue" description="Phosphoserine" evidence="2">
    <location>
        <position position="275"/>
    </location>
</feature>
<feature type="modified residue" description="Phosphoserine" evidence="2">
    <location>
        <position position="295"/>
    </location>
</feature>
<feature type="modified residue" description="Phosphoserine" evidence="2">
    <location>
        <position position="322"/>
    </location>
</feature>
<proteinExistence type="evidence at transcript level"/>
<comment type="function">
    <text evidence="1 2">Zinc-finger RNA-binding protein that destabilizes numerous cytoplasmic AU-rich element (ARE)-containing mRNA transcripts by promoting their poly(A) tail removal or deadenylation, and hence provide a mechanism for attenuating protein synthesis. Acts as an 3'-untranslated region (UTR) ARE mRNA-binding adapter protein to communicate signaling events to the mRNA decay machinery. Recruits deadenylase CNOT7 (and probably the CCR4-NOT complex) via association with CNOT1, and hence promotes ARE-mediated mRNA deadenylation. Also functions by recruiting components of the cytoplasmic RNA decay machinery to the bound ARE-containing mRNAs. Self regulates by destabilizing its own mRNA. Binds to 3'-UTR ARE of numerous mRNAs. Also binds to ARE of its own mRNA. Plays a role in anti-inflammatory responses; suppresses tumor necrosis factor (TNF)-alpha production by stimulating ARE-mediated TNF-alpha mRNA decay and several other inflammatory ARE-containing mRNAs in interferon (IFN)- and/or lipopolysaccharide (LPS)-induced macrophages. Also plays a role in the regulation of dendritic cell maturation at the post-transcriptional level, and hence operates as part of a negative feedback loop to limit the inflammatory response. Promotes ARE-mediated mRNA decay of hypoxia-inducible factor HIF1A mRNA during the response of endothelial cells to hypoxia. Positively regulates early adipogenesis of preadipocytes by promoting ARE-mediated mRNA decay of immediate early genes (IEGs). Negatively regulates hematopoietic/erythroid cell differentiation by promoting ARE-mediated mRNA decay of the transcription factor STAT5B mRNA. Plays a role in maintaining skeletal muscle satellite cell quiescence by promoting ARE-mediated mRNA decay of the myogenic determination factor MYOD1 mRNA. Also associates with and regulates the expression of non-ARE-containing target mRNAs at the post-transcriptional level, such as MHC class I mRNAs. Participates in association with argonaute RISC catalytic components in the ARE-mediated mRNA decay mechanism; assists microRNA (miRNA) targeting ARE-containing mRNAs. May also play a role in the regulation of cytoplasmic mRNA decapping; enhances decapping of ARE-containing RNAs, in vitro. Involved in the delivery of target ARE-mRNAs to processing bodies (PBs). In addition to its cytosolic mRNA-decay function, affects nuclear pre-mRNA processing. Negatively regulates nuclear poly(A)-binding protein PABPN1-stimulated polyadenylation activity on ARE-containing pre-mRNA during LPS-stimulated macrophages. Also involved in the regulation of stress granule (SG) and P-body (PB) formation and fusion. Plays a role in the regulation of keratinocyte proliferation, differentiation and apoptosis. Plays a role as a tumor suppressor by inhibiting cell proliferation in breast cancer cells.</text>
</comment>
<comment type="subunit">
    <text evidence="1 2">Associates with cytoplasmic CCR4-NOT and PAN2-PAN3 deadenylase complexes to trigger ARE-containing mRNA deadenylation and decay processes. Part of a mRNA decay activation complex at least composed of poly(A)-specific exoribonucleases CNOT6, EXOSC2 and XRN1 and mRNA-decapping enzymes DCP1A and DCP2. Associates with the RNA exosome complex. Interacts (via phosphorylated form) with 14-3-3 proteins; these interactions promote exclusion of ZFP36 from cytoplasmic stress granules in response to arsenite treatment in a MAPKAPK2-dependent manner and does not prevent CCR4-NOT deadenylase complex recruitment or ZFP36-induced ARE-containing mRNA deadenylation and decay processes. Interacts with 14-3-3 proteins; these interactions occur in response to rapamycin in an Akt-dependent manner. Interacts with AGO2 and AGO4. Interacts (via C-terminus) with CNOT1; this interaction occurs in a RNA-independent manner and induces mRNA deadenylation. Interacts (via N-terminus) with CNOT6. Interacts with CNOT6L. Interacts (via C-terminus) with CNOT7; this interaction occurs in a RNA-independent manner, induces mRNA deadenylation and is inhibited in a phosphorylation MAPKAPK2-dependent manner. Interacts (via unphosphorylated form) with CNOT8; this interaction occurs in a RNA-independent manner and is inhibited in a phosphorylation MAPKAPK2-dependent manner. Interacts with DCP1A. Interacts (via N-terminus) with DCP2. Interacts with EDC3. Interacts (via N-terminus) with EXOSC2. Interacts with heat shock 70 kDa proteins. Interacts with KHSRP; this interaction increases upon cytokine-induced treatment. Interacts with MAP3K4; this interaction enhances the association with SH3KBP1/CIN85. Interacts with MAPKAPK2; this interaction occurs upon skeletal muscle satellite cell activation. Interacts with NCL. Interacts with NUP214; this interaction increases upon lipopolysaccharide (LPS) stimulation. Interacts with PABPC1; this interaction occurs in a RNA-dependent manner. Interacts (via hypophosphorylated form) with PABPN1 (via RRM domain and C-terminal arginine-rich region); this interaction occurs in the nucleus in a RNA-independent manner, decreases in presence of single-stranded poly(A) RNA-oligomer and in a p38 MAPK-dependent-manner and inhibits nuclear poly(A) tail synthesis. Interacts with PAN2. Interacts (via C3H1-type zinc finger domains) with PKM. Interacts (via C3H1-type zinc finger domains) with nuclear RNA poly(A) polymerase. Interacts with PPP2CA; this interaction occurs in LPS-stimulated cells and induces ZFP36 dephosphorylation, and hence may promote ARE-containing mRNAs decay. Interacts (via C-terminus) with PRR5L (via C-terminus); this interaction may accelerate ZFP36-mediated mRNA decay during stress. Interacts (via C-terminus) with SFN; this interaction occurs in a phosphorylation-dependent manner. Interacts (via extreme C-terminal region) with SH3KBP1/CIN85 (via SH3 domains); this interaction enhances MAP3K4-induced phosphorylation of ZFP36 at Ser-64 and Ser-91 and does not alter neither ZFP36 binding to ARE-containing transcripts nor TNF-alpha mRNA decay. Interacts with XRN1. Interacts (via C-terminus and Ser-184 phosphorylated form) with YWHAB; this interaction occurs in a p38/MAPKAPK2-dependent manner, increases cytoplasmic localization of ZFP36 and protects ZFP36 from Ser-184 dephosphorylation by serine/threonine phosphatase 2A, and hence may be crucial for stabilizing ARE-containing mRNAs. Interacts (via phosphorylated form) with YWHAE. Interacts (via C-terminus) with YWHAG; this interaction occurs in a phosphorylation-dependent manner. Interacts with YWHAH; this interaction occurs in a phosphorylation-dependent manner. Interacts with YWHAQ; this interaction occurs in a phosphorylation-dependent manner. Interacts with (via C-terminus) YWHAZ; this interaction occurs in a phosphorylation-dependent manner. Does not interact with SH3KBP1. Interacts (via P-P-P-P-G repeats) with GIGYF2; the interaction is direct (By similarity).</text>
</comment>
<comment type="subcellular location">
    <subcellularLocation>
        <location evidence="1">Nucleus</location>
    </subcellularLocation>
    <subcellularLocation>
        <location evidence="1">Cytoplasm</location>
    </subcellularLocation>
    <subcellularLocation>
        <location evidence="1">Cytoplasmic granule</location>
    </subcellularLocation>
    <subcellularLocation>
        <location evidence="1">Cytoplasm</location>
        <location evidence="1">P-body</location>
    </subcellularLocation>
    <text evidence="1 2">Shuttles between nucleus and cytoplasm in a CRM1-dependent manner. Localized predominantly in the cytoplasm in a p38 MAPK- and YWHAB-dependent manner. Colocalizes with SH3KBP1 and MAP3K4 in the cytoplasm. Component of cytoplasmic stress granules (SGs). Localizes to cytoplasmic stress granules upon energy starvation. Localizes in processing bodies (PBs). Excluded from stress granules in a phosphorylation MAPKAPK2-dependent manner. Shuttles in and out of both cytoplasmic P-body and SGs.</text>
</comment>
<comment type="domain">
    <text evidence="2">The C3H1-type zinc finger domains are necessary for ARE-binding activity.</text>
</comment>
<comment type="PTM">
    <text evidence="1 2">Phosphorylated. Phosphorylation at serine and/or threonine residues occurs in a p38 MAPK- and MAPKAPK2-dependent manner. Phosphorylated by MAPKAPK2 at Ser-58 and Ser-184; phosphorylation increases its stability and cytoplasmic localization, promotes binding to 14-3-3 adapter proteins and inhibits the recruitment of cytoplasmic CCR4-NOT and PAN2-PAN3 deadenylase complexes to the mRNA decay machinery, thereby inhibiting ZFP36-induced ARE-containing mRNA deadenylation and decay processes. Phosphorylation by MAPKAPK2 does not impair ARE-containing RNA-binding. Phosphorylated in a MAPKAPK2- and p38 MAPK-dependent manner upon skeletal muscle satellite cell activation; this phosphorylation inhibits ZFP36-mediated mRNA decay activity, and hence stabilizes MYOD1 mRNA. Phosphorylated by MAPK1 upon mitogen stimulation. Phosphorylated at Ser-64 and Ser-91; these phosphorylations increase in a SH3KBP1-dependent manner. Phosphorylated at serine and threonine residues in a pyruvate kinase PKM- and p38 MAPK-dependent manner. Phosphorylation at Ser-58 may participate in the PKM-mediated degradation of ZFP36 in a p38 MAPK-dependent manner. Dephosphorylated by serine/threonine phosphatase 2A at Ser-184.</text>
</comment>
<comment type="PTM">
    <text evidence="2">Ubiquitinated; pyruvate kinase (PKM)-dependent ubiquitination leads to proteasomal degradation through a p38 MAPK signaling pathway.</text>
</comment>
<accession>Q6S9E0</accession>
<organism>
    <name type="scientific">Ovis aries</name>
    <name type="common">Sheep</name>
    <dbReference type="NCBI Taxonomy" id="9940"/>
    <lineage>
        <taxon>Eukaryota</taxon>
        <taxon>Metazoa</taxon>
        <taxon>Chordata</taxon>
        <taxon>Craniata</taxon>
        <taxon>Vertebrata</taxon>
        <taxon>Euteleostomi</taxon>
        <taxon>Mammalia</taxon>
        <taxon>Eutheria</taxon>
        <taxon>Laurasiatheria</taxon>
        <taxon>Artiodactyla</taxon>
        <taxon>Ruminantia</taxon>
        <taxon>Pecora</taxon>
        <taxon>Bovidae</taxon>
        <taxon>Caprinae</taxon>
        <taxon>Ovis</taxon>
    </lineage>
</organism>
<evidence type="ECO:0000250" key="1">
    <source>
        <dbReference type="UniProtKB" id="P22893"/>
    </source>
</evidence>
<evidence type="ECO:0000250" key="2">
    <source>
        <dbReference type="UniProtKB" id="P26651"/>
    </source>
</evidence>
<evidence type="ECO:0000250" key="3">
    <source>
        <dbReference type="UniProtKB" id="P47973"/>
    </source>
</evidence>
<evidence type="ECO:0000255" key="4">
    <source>
        <dbReference type="PROSITE-ProRule" id="PRU00723"/>
    </source>
</evidence>
<evidence type="ECO:0000256" key="5">
    <source>
        <dbReference type="SAM" id="MobiDB-lite"/>
    </source>
</evidence>
<evidence type="ECO:0000305" key="6"/>
<reference key="1">
    <citation type="journal article" date="2003" name="J. Natl. Cancer Inst.">
        <title>Interaction of retroviral Tax oncoproteins with tristetraprolin and regulation of tumor necrosis factor-alpha expression.</title>
        <authorList>
            <person name="Twizere J.-C."/>
            <person name="Kruys V."/>
            <person name="Lefebvre L."/>
            <person name="Vanderplasschen A."/>
            <person name="Collete D."/>
            <person name="Debacq C."/>
            <person name="Lai W.S."/>
            <person name="Jauniaux J.-C."/>
            <person name="Bernstein L.R."/>
            <person name="Semmes J.O."/>
            <person name="Burny A."/>
            <person name="Blackshear P.J."/>
            <person name="Kettmann R."/>
            <person name="Willems L."/>
        </authorList>
    </citation>
    <scope>NUCLEOTIDE SEQUENCE [MRNA]</scope>
</reference>